<reference key="1">
    <citation type="journal article" date="1997" name="Microbiology">
        <title>A novel gene, algK, from the alginate biosynthesis cluster of Pseudomonas aeruginosa.</title>
        <authorList>
            <person name="Aarons S.J."/>
            <person name="Sutherland I.W."/>
            <person name="Chakrabarty A.M."/>
            <person name="Gallagher M.P."/>
        </authorList>
    </citation>
    <scope>NUCLEOTIDE SEQUENCE [GENOMIC DNA]</scope>
    <source>
        <strain>8830</strain>
    </source>
</reference>
<reference key="2">
    <citation type="journal article" date="1998" name="J. Bacteriol.">
        <title>Deletion of algK in mucoid Pseudomonas aeruginosa blocks alginate polymer formation and results in uronic acid secretion.</title>
        <authorList>
            <person name="Jain S."/>
            <person name="Ohman D.E."/>
        </authorList>
    </citation>
    <scope>NUCLEOTIDE SEQUENCE [GENOMIC DNA]</scope>
    <scope>FUNCTION</scope>
    <scope>SUBCELLULAR LOCATION</scope>
    <scope>DISRUPTION PHENOTYPE</scope>
    <source>
        <strain>FRD1</strain>
    </source>
</reference>
<reference key="3">
    <citation type="journal article" date="2000" name="Nature">
        <title>Complete genome sequence of Pseudomonas aeruginosa PAO1, an opportunistic pathogen.</title>
        <authorList>
            <person name="Stover C.K."/>
            <person name="Pham X.-Q.T."/>
            <person name="Erwin A.L."/>
            <person name="Mizoguchi S.D."/>
            <person name="Warrener P."/>
            <person name="Hickey M.J."/>
            <person name="Brinkman F.S.L."/>
            <person name="Hufnagle W.O."/>
            <person name="Kowalik D.J."/>
            <person name="Lagrou M."/>
            <person name="Garber R.L."/>
            <person name="Goltry L."/>
            <person name="Tolentino E."/>
            <person name="Westbrock-Wadman S."/>
            <person name="Yuan Y."/>
            <person name="Brody L.L."/>
            <person name="Coulter S.N."/>
            <person name="Folger K.R."/>
            <person name="Kas A."/>
            <person name="Larbig K."/>
            <person name="Lim R.M."/>
            <person name="Smith K.A."/>
            <person name="Spencer D.H."/>
            <person name="Wong G.K.-S."/>
            <person name="Wu Z."/>
            <person name="Paulsen I.T."/>
            <person name="Reizer J."/>
            <person name="Saier M.H. Jr."/>
            <person name="Hancock R.E.W."/>
            <person name="Lory S."/>
            <person name="Olson M.V."/>
        </authorList>
    </citation>
    <scope>NUCLEOTIDE SEQUENCE [LARGE SCALE GENOMIC DNA]</scope>
    <source>
        <strain>ATCC 15692 / DSM 22644 / CIP 104116 / JCM 14847 / LMG 12228 / 1C / PRS 101 / PAO1</strain>
    </source>
</reference>
<reference key="4">
    <citation type="journal article" date="2012" name="Appl. Microbiol. Biotechnol.">
        <title>Identification of a periplasmic AlgK-AlgX-MucD multiprotein complex in Pseudomonas aeruginosa involved in biosynthesis and regulation of alginate.</title>
        <authorList>
            <person name="Hay I.D."/>
            <person name="Schmidt O."/>
            <person name="Filitcheva J."/>
            <person name="Rehm B.H."/>
        </authorList>
    </citation>
    <scope>INTERACTION WITH ALGX</scope>
    <scope>SUBCELLULAR LOCATION</scope>
    <source>
        <strain>ATCC 15692 / DSM 22644 / CIP 104116 / JCM 14847 / LMG 12228 / 1C / PRS 101 / PAO1</strain>
    </source>
</reference>
<sequence length="475" mass="52475">MKMPILPPLPLASRHLLLASAIALAAGCAGLPDQRLAQEALERGDLATAQSNYQALAAMGYADAQVGLADMQVASGDSAQQAKAEKLYREAAQTSPRARARLGKWLAAKPGASDAEHREAERLLSQAFEQGEDSALVPLIVLYLQYPQSWPEIDPQQRIDQWRARGLPQADLAQIILYRTQGTYAQHLGEIEQVCQRWLRRMDVCWYELATVYQMQGNAEKQKVLLEQLRAAYKAGRVPGERVDSVAGVLADGELGQPDPQTAQALLEEIAPSYPAAWVSLAKLLYDYPDQGDLEKMLGYLKNAQDAAQPRAELLLGRLYYDGKWAPQDPRKAERHLLKAAASEPQANYYLGQIYRRGFLGKVYPQKAVDHLILAARAGQASADMALAQLWSQGRGIQPNRVNAYVFGQLAVQQQVPQASDLLGQIEAQLPPAERSQAQQLLKREQQSRGNNWQATVSLLQSQDSPINEEEPESL</sequence>
<gene>
    <name type="primary">algK</name>
    <name type="ordered locus">PA3543</name>
</gene>
<feature type="signal peptide" evidence="1">
    <location>
        <begin position="1"/>
        <end position="27"/>
    </location>
</feature>
<feature type="chain" id="PRO_0000020667" description="Alginate biosynthesis protein AlgK">
    <location>
        <begin position="28"/>
        <end position="475"/>
    </location>
</feature>
<feature type="region of interest" description="Disordered" evidence="2">
    <location>
        <begin position="436"/>
        <end position="475"/>
    </location>
</feature>
<feature type="compositionally biased region" description="Polar residues" evidence="2">
    <location>
        <begin position="448"/>
        <end position="466"/>
    </location>
</feature>
<feature type="lipid moiety-binding region" description="N-palmitoyl cysteine" evidence="1">
    <location>
        <position position="28"/>
    </location>
</feature>
<feature type="lipid moiety-binding region" description="S-diacylglycerol cysteine" evidence="1">
    <location>
        <position position="28"/>
    </location>
</feature>
<feature type="sequence conflict" description="In Ref. 1; AAC38141." evidence="5" ref="1">
    <original>S</original>
    <variation>R</variation>
    <location>
        <position position="78"/>
    </location>
</feature>
<feature type="sequence conflict" description="In Ref. 1; AAC38141." evidence="5" ref="1">
    <original>L</original>
    <variation>F</variation>
    <location>
        <position position="177"/>
    </location>
</feature>
<evidence type="ECO:0000255" key="1"/>
<evidence type="ECO:0000256" key="2">
    <source>
        <dbReference type="SAM" id="MobiDB-lite"/>
    </source>
</evidence>
<evidence type="ECO:0000269" key="3">
    <source>
    </source>
</evidence>
<evidence type="ECO:0000269" key="4">
    <source>
    </source>
</evidence>
<evidence type="ECO:0000305" key="5"/>
<evidence type="ECO:0000305" key="6">
    <source>
    </source>
</evidence>
<evidence type="ECO:0000305" key="7">
    <source>
    </source>
</evidence>
<accession>P96956</accession>
<accession>O52506</accession>
<name>ALGK_PSEAE</name>
<keyword id="KW-0016">Alginate biosynthesis</keyword>
<keyword id="KW-0998">Cell outer membrane</keyword>
<keyword id="KW-0449">Lipoprotein</keyword>
<keyword id="KW-0472">Membrane</keyword>
<keyword id="KW-0564">Palmitate</keyword>
<keyword id="KW-1185">Reference proteome</keyword>
<keyword id="KW-0732">Signal</keyword>
<proteinExistence type="evidence at protein level"/>
<protein>
    <recommendedName>
        <fullName>Alginate biosynthesis protein AlgK</fullName>
    </recommendedName>
</protein>
<comment type="function">
    <text evidence="4">May be involved in the polymerization of mannuronate to alginate.</text>
</comment>
<comment type="pathway">
    <text>Glycan biosynthesis; alginate biosynthesis.</text>
</comment>
<comment type="subunit">
    <text evidence="3">Interacts with AlgX.</text>
</comment>
<comment type="subcellular location">
    <subcellularLocation>
        <location evidence="6 7">Cell outer membrane</location>
        <topology evidence="6 7">Lipid-anchor</topology>
        <orientation evidence="6 7">Periplasmic side</orientation>
    </subcellularLocation>
</comment>
<comment type="disruption phenotype">
    <text evidence="4">Cells lacking this gene in the mucoid strain FRD1 are phenotypically non-mucoid, i.e. non-alginate producing, and secrete high levels of dialyzable and low-molecular-weight uronic acids.</text>
</comment>
<comment type="similarity">
    <text evidence="5">Belongs to the AlgK family.</text>
</comment>
<organism>
    <name type="scientific">Pseudomonas aeruginosa (strain ATCC 15692 / DSM 22644 / CIP 104116 / JCM 14847 / LMG 12228 / 1C / PRS 101 / PAO1)</name>
    <dbReference type="NCBI Taxonomy" id="208964"/>
    <lineage>
        <taxon>Bacteria</taxon>
        <taxon>Pseudomonadati</taxon>
        <taxon>Pseudomonadota</taxon>
        <taxon>Gammaproteobacteria</taxon>
        <taxon>Pseudomonadales</taxon>
        <taxon>Pseudomonadaceae</taxon>
        <taxon>Pseudomonas</taxon>
    </lineage>
</organism>
<dbReference type="EMBL" id="X99206">
    <property type="protein sequence ID" value="CAA67592.1"/>
    <property type="molecule type" value="Genomic_DNA"/>
</dbReference>
<dbReference type="EMBL" id="AF039535">
    <property type="protein sequence ID" value="AAC38141.1"/>
    <property type="molecule type" value="Genomic_DNA"/>
</dbReference>
<dbReference type="EMBL" id="AE004091">
    <property type="protein sequence ID" value="AAG06931.1"/>
    <property type="molecule type" value="Genomic_DNA"/>
</dbReference>
<dbReference type="PIR" id="D83202">
    <property type="entry name" value="D83202"/>
</dbReference>
<dbReference type="RefSeq" id="NP_252233.1">
    <property type="nucleotide sequence ID" value="NC_002516.2"/>
</dbReference>
<dbReference type="RefSeq" id="WP_003112887.1">
    <property type="nucleotide sequence ID" value="NZ_QZGE01000001.1"/>
</dbReference>
<dbReference type="SMR" id="P96956"/>
<dbReference type="STRING" id="208964.PA3543"/>
<dbReference type="PaxDb" id="208964-PA3543"/>
<dbReference type="GeneID" id="878771"/>
<dbReference type="KEGG" id="pae:PA3543"/>
<dbReference type="PATRIC" id="fig|208964.12.peg.3707"/>
<dbReference type="PseudoCAP" id="PA3543"/>
<dbReference type="HOGENOM" id="CLU_595617_0_0_6"/>
<dbReference type="InParanoid" id="P96956"/>
<dbReference type="OrthoDB" id="6383809at2"/>
<dbReference type="PhylomeDB" id="P96956"/>
<dbReference type="BioCyc" id="PAER208964:G1FZ6-3611-MONOMER"/>
<dbReference type="UniPathway" id="UPA00286"/>
<dbReference type="Proteomes" id="UP000002438">
    <property type="component" value="Chromosome"/>
</dbReference>
<dbReference type="GO" id="GO:0009279">
    <property type="term" value="C:cell outer membrane"/>
    <property type="evidence" value="ECO:0007669"/>
    <property type="project" value="UniProtKB-SubCell"/>
</dbReference>
<dbReference type="GO" id="GO:0042121">
    <property type="term" value="P:alginic acid biosynthetic process"/>
    <property type="evidence" value="ECO:0000314"/>
    <property type="project" value="PseudoCAP"/>
</dbReference>
<dbReference type="Gene3D" id="1.25.40.10">
    <property type="entry name" value="Tetratricopeptide repeat domain"/>
    <property type="match status" value="1"/>
</dbReference>
<dbReference type="InterPro" id="IPR053440">
    <property type="entry name" value="Alginate_biosynth_AlgK"/>
</dbReference>
<dbReference type="InterPro" id="IPR006597">
    <property type="entry name" value="Sel1-like"/>
</dbReference>
<dbReference type="InterPro" id="IPR050767">
    <property type="entry name" value="Sel1_AlgK"/>
</dbReference>
<dbReference type="InterPro" id="IPR011990">
    <property type="entry name" value="TPR-like_helical_dom_sf"/>
</dbReference>
<dbReference type="NCBIfam" id="NF038194">
    <property type="entry name" value="AlgK_TPR_lipo"/>
    <property type="match status" value="1"/>
</dbReference>
<dbReference type="PANTHER" id="PTHR11102:SF160">
    <property type="entry name" value="ERAD-ASSOCIATED E3 UBIQUITIN-PROTEIN LIGASE COMPONENT HRD3"/>
    <property type="match status" value="1"/>
</dbReference>
<dbReference type="PANTHER" id="PTHR11102">
    <property type="entry name" value="SEL-1-LIKE PROTEIN"/>
    <property type="match status" value="1"/>
</dbReference>
<dbReference type="Pfam" id="PF08238">
    <property type="entry name" value="Sel1"/>
    <property type="match status" value="3"/>
</dbReference>
<dbReference type="SMART" id="SM00671">
    <property type="entry name" value="SEL1"/>
    <property type="match status" value="4"/>
</dbReference>
<dbReference type="SUPFAM" id="SSF81901">
    <property type="entry name" value="HCP-like"/>
    <property type="match status" value="1"/>
</dbReference>